<proteinExistence type="inferred from homology"/>
<protein>
    <recommendedName>
        <fullName evidence="1">Protein translation factor SUI1 homolog</fullName>
    </recommendedName>
</protein>
<sequence>MSEICPVCGLPKDLCVCEEVAKEQQFIVIKTGKRRYGKEVTIIEGIDKGEINLEELAKYLKSKLACGGTVKNGVIELQGNHVNRVKELLIKKGFNPERIKT</sequence>
<dbReference type="EMBL" id="AE000782">
    <property type="protein sequence ID" value="AAB90322.1"/>
    <property type="molecule type" value="Genomic_DNA"/>
</dbReference>
<dbReference type="PIR" id="B69364">
    <property type="entry name" value="B69364"/>
</dbReference>
<dbReference type="SMR" id="O29348"/>
<dbReference type="STRING" id="224325.AF_0914"/>
<dbReference type="PaxDb" id="224325-AF_0914"/>
<dbReference type="EnsemblBacteria" id="AAB90322">
    <property type="protein sequence ID" value="AAB90322"/>
    <property type="gene ID" value="AF_0914"/>
</dbReference>
<dbReference type="KEGG" id="afu:AF_0914"/>
<dbReference type="eggNOG" id="arCOG04223">
    <property type="taxonomic scope" value="Archaea"/>
</dbReference>
<dbReference type="HOGENOM" id="CLU_082805_6_1_2"/>
<dbReference type="OrthoDB" id="11182at2157"/>
<dbReference type="PhylomeDB" id="O29348"/>
<dbReference type="Proteomes" id="UP000002199">
    <property type="component" value="Chromosome"/>
</dbReference>
<dbReference type="GO" id="GO:0003729">
    <property type="term" value="F:mRNA binding"/>
    <property type="evidence" value="ECO:0007669"/>
    <property type="project" value="TreeGrafter"/>
</dbReference>
<dbReference type="GO" id="GO:0003743">
    <property type="term" value="F:translation initiation factor activity"/>
    <property type="evidence" value="ECO:0007669"/>
    <property type="project" value="InterPro"/>
</dbReference>
<dbReference type="GO" id="GO:0001731">
    <property type="term" value="P:formation of translation preinitiation complex"/>
    <property type="evidence" value="ECO:0007669"/>
    <property type="project" value="TreeGrafter"/>
</dbReference>
<dbReference type="GO" id="GO:0006417">
    <property type="term" value="P:regulation of translation"/>
    <property type="evidence" value="ECO:0007669"/>
    <property type="project" value="UniProtKB-UniRule"/>
</dbReference>
<dbReference type="GO" id="GO:0002188">
    <property type="term" value="P:translation reinitiation"/>
    <property type="evidence" value="ECO:0007669"/>
    <property type="project" value="TreeGrafter"/>
</dbReference>
<dbReference type="CDD" id="cd11567">
    <property type="entry name" value="YciH_like"/>
    <property type="match status" value="1"/>
</dbReference>
<dbReference type="Gene3D" id="3.30.780.10">
    <property type="entry name" value="SUI1-like domain"/>
    <property type="match status" value="1"/>
</dbReference>
<dbReference type="HAMAP" id="MF_00604">
    <property type="entry name" value="SUI1"/>
    <property type="match status" value="1"/>
</dbReference>
<dbReference type="InterPro" id="IPR050318">
    <property type="entry name" value="DENR/SUI1_TIF"/>
</dbReference>
<dbReference type="InterPro" id="IPR001950">
    <property type="entry name" value="SUI1"/>
</dbReference>
<dbReference type="InterPro" id="IPR022851">
    <property type="entry name" value="SUI1_arc"/>
</dbReference>
<dbReference type="InterPro" id="IPR005872">
    <property type="entry name" value="SUI1_arc_bac"/>
</dbReference>
<dbReference type="InterPro" id="IPR036877">
    <property type="entry name" value="SUI1_dom_sf"/>
</dbReference>
<dbReference type="NCBIfam" id="NF002096">
    <property type="entry name" value="PRK00939.1"/>
    <property type="match status" value="1"/>
</dbReference>
<dbReference type="NCBIfam" id="TIGR01158">
    <property type="entry name" value="SUI1_rel"/>
    <property type="match status" value="1"/>
</dbReference>
<dbReference type="PANTHER" id="PTHR12789:SF0">
    <property type="entry name" value="DENSITY-REGULATED PROTEIN"/>
    <property type="match status" value="1"/>
</dbReference>
<dbReference type="PANTHER" id="PTHR12789">
    <property type="entry name" value="DENSITY-REGULATED PROTEIN HOMOLOG"/>
    <property type="match status" value="1"/>
</dbReference>
<dbReference type="Pfam" id="PF01253">
    <property type="entry name" value="SUI1"/>
    <property type="match status" value="1"/>
</dbReference>
<dbReference type="PIRSF" id="PIRSF037511">
    <property type="entry name" value="Transl_init_SUI1_pro"/>
    <property type="match status" value="1"/>
</dbReference>
<dbReference type="SUPFAM" id="SSF55159">
    <property type="entry name" value="eIF1-like"/>
    <property type="match status" value="1"/>
</dbReference>
<dbReference type="PROSITE" id="PS50296">
    <property type="entry name" value="SUI1"/>
    <property type="match status" value="1"/>
</dbReference>
<name>SUI1_ARCFU</name>
<organism>
    <name type="scientific">Archaeoglobus fulgidus (strain ATCC 49558 / DSM 4304 / JCM 9628 / NBRC 100126 / VC-16)</name>
    <dbReference type="NCBI Taxonomy" id="224325"/>
    <lineage>
        <taxon>Archaea</taxon>
        <taxon>Methanobacteriati</taxon>
        <taxon>Methanobacteriota</taxon>
        <taxon>Archaeoglobi</taxon>
        <taxon>Archaeoglobales</taxon>
        <taxon>Archaeoglobaceae</taxon>
        <taxon>Archaeoglobus</taxon>
    </lineage>
</organism>
<reference key="1">
    <citation type="journal article" date="1997" name="Nature">
        <title>The complete genome sequence of the hyperthermophilic, sulphate-reducing archaeon Archaeoglobus fulgidus.</title>
        <authorList>
            <person name="Klenk H.-P."/>
            <person name="Clayton R.A."/>
            <person name="Tomb J.-F."/>
            <person name="White O."/>
            <person name="Nelson K.E."/>
            <person name="Ketchum K.A."/>
            <person name="Dodson R.J."/>
            <person name="Gwinn M.L."/>
            <person name="Hickey E.K."/>
            <person name="Peterson J.D."/>
            <person name="Richardson D.L."/>
            <person name="Kerlavage A.R."/>
            <person name="Graham D.E."/>
            <person name="Kyrpides N.C."/>
            <person name="Fleischmann R.D."/>
            <person name="Quackenbush J."/>
            <person name="Lee N.H."/>
            <person name="Sutton G.G."/>
            <person name="Gill S.R."/>
            <person name="Kirkness E.F."/>
            <person name="Dougherty B.A."/>
            <person name="McKenney K."/>
            <person name="Adams M.D."/>
            <person name="Loftus B.J."/>
            <person name="Peterson S.N."/>
            <person name="Reich C.I."/>
            <person name="McNeil L.K."/>
            <person name="Badger J.H."/>
            <person name="Glodek A."/>
            <person name="Zhou L."/>
            <person name="Overbeek R."/>
            <person name="Gocayne J.D."/>
            <person name="Weidman J.F."/>
            <person name="McDonald L.A."/>
            <person name="Utterback T.R."/>
            <person name="Cotton M.D."/>
            <person name="Spriggs T."/>
            <person name="Artiach P."/>
            <person name="Kaine B.P."/>
            <person name="Sykes S.M."/>
            <person name="Sadow P.W."/>
            <person name="D'Andrea K.P."/>
            <person name="Bowman C."/>
            <person name="Fujii C."/>
            <person name="Garland S.A."/>
            <person name="Mason T.M."/>
            <person name="Olsen G.J."/>
            <person name="Fraser C.M."/>
            <person name="Smith H.O."/>
            <person name="Woese C.R."/>
            <person name="Venter J.C."/>
        </authorList>
    </citation>
    <scope>NUCLEOTIDE SEQUENCE [LARGE SCALE GENOMIC DNA]</scope>
    <source>
        <strain>ATCC 49558 / DSM 4304 / JCM 9628 / NBRC 100126 / VC-16</strain>
    </source>
</reference>
<evidence type="ECO:0000255" key="1">
    <source>
        <dbReference type="HAMAP-Rule" id="MF_00604"/>
    </source>
</evidence>
<keyword id="KW-0648">Protein biosynthesis</keyword>
<keyword id="KW-1185">Reference proteome</keyword>
<keyword id="KW-0810">Translation regulation</keyword>
<accession>O29348</accession>
<comment type="similarity">
    <text evidence="1">Belongs to the SUI1 family.</text>
</comment>
<feature type="chain" id="PRO_0000130576" description="Protein translation factor SUI1 homolog">
    <location>
        <begin position="1"/>
        <end position="101"/>
    </location>
</feature>
<gene>
    <name type="ordered locus">AF_0914</name>
</gene>